<accession>Q76KB1</accession>
<sequence>MGLLRIMLPPKLQLLAVLVFGVAVLFLENQIQKLEESRGKLERAIARHEVREIEQRHTADGPRQEVALDEEDDVVIIYNRVPKTASTSFTNIAYDLCAKNRYHVLHINTTKNNPVMSLQDQVRFVKNVTSWKEMKPGFYHGHVSYLDFAKFGVKKKPIYINVIRDPIERLVSYYYFLRFGDDYRPGLRRRKQGDKKTFDECVAAGGSDCAPEKLWLQIPFFCGHSSECWNVGSRWALEQAKYNLINEYFLVGVTEELEDFIMLLEAALPRFFRGATELYRTGKKSHLRKTTEKKLPTKETIAKLQQSEIWKMENEFYEFALEQFQFVRAHAVREKDGELYILAQNFFYEKIYPKSN</sequence>
<protein>
    <recommendedName>
        <fullName evidence="2">Heparan sulfate 2-O-sulfotransferase 1</fullName>
        <ecNumber evidence="6">2.8.2.-</ecNumber>
    </recommendedName>
    <alternativeName>
        <fullName evidence="3">2-O-sulfotransferase</fullName>
        <shortName evidence="3">2-OST</shortName>
        <shortName evidence="8">2OST</shortName>
    </alternativeName>
    <alternativeName>
        <fullName evidence="9">HS 2-O-sulfotransferase</fullName>
        <shortName evidence="7">cHS2ST</shortName>
    </alternativeName>
    <alternativeName>
        <fullName evidence="3">Heparan sulfate 2-sulfotransferase</fullName>
    </alternativeName>
</protein>
<proteinExistence type="evidence at protein level"/>
<keyword id="KW-0002">3D-structure</keyword>
<keyword id="KW-0175">Coiled coil</keyword>
<keyword id="KW-1015">Disulfide bond</keyword>
<keyword id="KW-0325">Glycoprotein</keyword>
<keyword id="KW-0333">Golgi apparatus</keyword>
<keyword id="KW-0472">Membrane</keyword>
<keyword id="KW-1185">Reference proteome</keyword>
<keyword id="KW-0735">Signal-anchor</keyword>
<keyword id="KW-0808">Transferase</keyword>
<keyword id="KW-0812">Transmembrane</keyword>
<keyword id="KW-1133">Transmembrane helix</keyword>
<organism evidence="12">
    <name type="scientific">Gallus gallus</name>
    <name type="common">Chicken</name>
    <dbReference type="NCBI Taxonomy" id="9031"/>
    <lineage>
        <taxon>Eukaryota</taxon>
        <taxon>Metazoa</taxon>
        <taxon>Chordata</taxon>
        <taxon>Craniata</taxon>
        <taxon>Vertebrata</taxon>
        <taxon>Euteleostomi</taxon>
        <taxon>Archelosauria</taxon>
        <taxon>Archosauria</taxon>
        <taxon>Dinosauria</taxon>
        <taxon>Saurischia</taxon>
        <taxon>Theropoda</taxon>
        <taxon>Coelurosauria</taxon>
        <taxon>Aves</taxon>
        <taxon>Neognathae</taxon>
        <taxon>Galloanserae</taxon>
        <taxon>Galliformes</taxon>
        <taxon>Phasianidae</taxon>
        <taxon>Phasianinae</taxon>
        <taxon>Gallus</taxon>
    </lineage>
</organism>
<gene>
    <name evidence="2" type="primary">HS2ST1</name>
    <name evidence="7" type="synonym">HS2ST</name>
</gene>
<dbReference type="EC" id="2.8.2.-" evidence="6"/>
<dbReference type="EMBL" id="AB093516">
    <property type="protein sequence ID" value="BAD00706.1"/>
    <property type="molecule type" value="mRNA"/>
</dbReference>
<dbReference type="RefSeq" id="NP_989812.1">
    <property type="nucleotide sequence ID" value="NM_204481.2"/>
</dbReference>
<dbReference type="PDB" id="3F5F">
    <property type="method" value="X-ray"/>
    <property type="resolution" value="2.65 A"/>
    <property type="chains" value="A=69-356"/>
</dbReference>
<dbReference type="PDB" id="4NDZ">
    <property type="method" value="X-ray"/>
    <property type="resolution" value="3.45 A"/>
    <property type="chains" value="A/B/C/D/E/F=69-356"/>
</dbReference>
<dbReference type="PDBsum" id="3F5F"/>
<dbReference type="PDBsum" id="4NDZ"/>
<dbReference type="SMR" id="Q76KB1"/>
<dbReference type="DIP" id="DIP-48642N"/>
<dbReference type="FunCoup" id="Q76KB1">
    <property type="interactions" value="2472"/>
</dbReference>
<dbReference type="STRING" id="9031.ENSGALP00000042738"/>
<dbReference type="GlyCosmos" id="Q76KB1">
    <property type="glycosylation" value="2 sites, No reported glycans"/>
</dbReference>
<dbReference type="GlyGen" id="Q76KB1">
    <property type="glycosylation" value="2 sites"/>
</dbReference>
<dbReference type="PaxDb" id="9031-ENSGALP00000042738"/>
<dbReference type="Ensembl" id="ENSGALT00010056080.1">
    <property type="protein sequence ID" value="ENSGALP00010033929.1"/>
    <property type="gene ID" value="ENSGALG00010023030.1"/>
</dbReference>
<dbReference type="GeneID" id="395140"/>
<dbReference type="KEGG" id="gga:395140"/>
<dbReference type="CTD" id="9653"/>
<dbReference type="VEuPathDB" id="HostDB:geneid_395140"/>
<dbReference type="eggNOG" id="KOG3922">
    <property type="taxonomic scope" value="Eukaryota"/>
</dbReference>
<dbReference type="GeneTree" id="ENSGT00530000063408"/>
<dbReference type="InParanoid" id="Q76KB1"/>
<dbReference type="OMA" id="PNQIQFV"/>
<dbReference type="OrthoDB" id="10019582at2759"/>
<dbReference type="PhylomeDB" id="Q76KB1"/>
<dbReference type="TreeFam" id="TF315238"/>
<dbReference type="Reactome" id="R-GGA-2022928">
    <property type="pathway name" value="HS-GAG biosynthesis"/>
</dbReference>
<dbReference type="EvolutionaryTrace" id="Q76KB1"/>
<dbReference type="PRO" id="PR:Q76KB1"/>
<dbReference type="Proteomes" id="UP000000539">
    <property type="component" value="Chromosome 8"/>
</dbReference>
<dbReference type="Bgee" id="ENSGALG00000028423">
    <property type="expression patterns" value="Expressed in liver and 14 other cell types or tissues"/>
</dbReference>
<dbReference type="GO" id="GO:0000139">
    <property type="term" value="C:Golgi membrane"/>
    <property type="evidence" value="ECO:0007669"/>
    <property type="project" value="UniProtKB-SubCell"/>
</dbReference>
<dbReference type="GO" id="GO:0004394">
    <property type="term" value="F:heparan sulfate 2-sulfotransferase activity"/>
    <property type="evidence" value="ECO:0000318"/>
    <property type="project" value="GO_Central"/>
</dbReference>
<dbReference type="GO" id="GO:0042802">
    <property type="term" value="F:identical protein binding"/>
    <property type="evidence" value="ECO:0000353"/>
    <property type="project" value="IntAct"/>
</dbReference>
<dbReference type="GO" id="GO:0010467">
    <property type="term" value="P:gene expression"/>
    <property type="evidence" value="ECO:0007669"/>
    <property type="project" value="Ensembl"/>
</dbReference>
<dbReference type="GO" id="GO:0015012">
    <property type="term" value="P:heparan sulfate proteoglycan biosynthetic process"/>
    <property type="evidence" value="ECO:0007669"/>
    <property type="project" value="Ensembl"/>
</dbReference>
<dbReference type="GO" id="GO:0030202">
    <property type="term" value="P:heparin proteoglycan metabolic process"/>
    <property type="evidence" value="ECO:0007669"/>
    <property type="project" value="Ensembl"/>
</dbReference>
<dbReference type="GO" id="GO:0060676">
    <property type="term" value="P:ureteric bud formation"/>
    <property type="evidence" value="ECO:0007669"/>
    <property type="project" value="Ensembl"/>
</dbReference>
<dbReference type="FunFam" id="3.40.50.300:FF:000534">
    <property type="entry name" value="Heparan sulfate 2-O-sulfotransferase 1"/>
    <property type="match status" value="1"/>
</dbReference>
<dbReference type="Gene3D" id="3.40.50.300">
    <property type="entry name" value="P-loop containing nucleotide triphosphate hydrolases"/>
    <property type="match status" value="1"/>
</dbReference>
<dbReference type="InterPro" id="IPR007734">
    <property type="entry name" value="Heparan_SO4_2-O-STrfase"/>
</dbReference>
<dbReference type="InterPro" id="IPR027417">
    <property type="entry name" value="P-loop_NTPase"/>
</dbReference>
<dbReference type="InterPro" id="IPR005331">
    <property type="entry name" value="Sulfotransferase"/>
</dbReference>
<dbReference type="PANTHER" id="PTHR12129">
    <property type="entry name" value="HEPARAN SULFATE 2-O-SULFOTRANSFERASE"/>
    <property type="match status" value="1"/>
</dbReference>
<dbReference type="PANTHER" id="PTHR12129:SF17">
    <property type="entry name" value="HEPARAN SULFATE 2-O-SULFOTRANSFERASE 1"/>
    <property type="match status" value="1"/>
</dbReference>
<dbReference type="Pfam" id="PF03567">
    <property type="entry name" value="Sulfotransfer_2"/>
    <property type="match status" value="1"/>
</dbReference>
<dbReference type="SUPFAM" id="SSF52540">
    <property type="entry name" value="P-loop containing nucleoside triphosphate hydrolases"/>
    <property type="match status" value="1"/>
</dbReference>
<name>HS2ST_CHICK</name>
<reference key="1">
    <citation type="journal article" date="2004" name="J. Biol. Chem.">
        <title>Distinctive expression patterns of heparan sulfate O-sulfotransferases and regional differences in heparan sulfate structure in chick limb buds.</title>
        <authorList>
            <person name="Nogami K."/>
            <person name="Suzuki H."/>
            <person name="Habuchi H."/>
            <person name="Ishiguro N."/>
            <person name="Iwata H."/>
            <person name="Kimata K."/>
        </authorList>
    </citation>
    <scope>NUCLEOTIDE SEQUENCE [MRNA]</scope>
    <scope>TISSUE SPECIFICITY</scope>
</reference>
<reference evidence="13" key="2">
    <citation type="journal article" date="2008" name="Proc. Natl. Acad. Sci. U.S.A.">
        <title>Redirecting the substrate specificity of heparan sulfate 2-O-sulfotransferase by structurally guided mutagenesis.</title>
        <authorList>
            <person name="Bethea H.N."/>
            <person name="Xu D."/>
            <person name="Liu J."/>
            <person name="Pedersen L.C."/>
        </authorList>
    </citation>
    <scope>X-RAY CRYSTALLOGRAPHY (2.65 ANGSTROMS) OF 69-356 IN COMPLEX WITH ADENOSINE 3',5'-BISPHOSPHATE</scope>
    <scope>FUNCTION</scope>
    <scope>CATALYTIC ACTIVITY</scope>
    <scope>DISULFIDE BONDS</scope>
    <scope>MUTAGENESIS OF ARG-80; TYR-94; HIS-106; HIS-140; HIS-142; ARG-189 AND ARG-288</scope>
    <scope>ACTIVE SITE</scope>
    <scope>SUBUNIT</scope>
</reference>
<reference key="3">
    <citation type="journal article" date="2014" name="J. Biol. Chem.">
        <title>Molecular mechanism of substrate specificity for heparan sulfate 2-O-sulfotransferase.</title>
        <authorList>
            <person name="Liu C."/>
            <person name="Sheng J."/>
            <person name="Krahn J.M."/>
            <person name="Perera L."/>
            <person name="Xu Y."/>
            <person name="Hsieh P.H."/>
            <person name="Dou W."/>
            <person name="Liu J."/>
            <person name="Pedersen L.C."/>
        </authorList>
    </citation>
    <scope>X-RAY CRYSTALLOGRAPHY (3.45 ANGSTROMS) OF 69-356 IN COMPLEX WITH ADENOSINE-3'-5'-DIPHOSPHATE AND HEPTASACCHARIDE</scope>
    <scope>SUBUNIT</scope>
    <scope>DISULFIDE BONDS</scope>
</reference>
<evidence type="ECO:0000250" key="1">
    <source>
        <dbReference type="UniProtKB" id="A0A8C2LVE3"/>
    </source>
</evidence>
<evidence type="ECO:0000250" key="2">
    <source>
        <dbReference type="UniProtKB" id="Q7LGA3"/>
    </source>
</evidence>
<evidence type="ECO:0000250" key="3">
    <source>
        <dbReference type="UniProtKB" id="Q8R3H7"/>
    </source>
</evidence>
<evidence type="ECO:0000255" key="4"/>
<evidence type="ECO:0000269" key="5">
    <source>
    </source>
</evidence>
<evidence type="ECO:0000269" key="6">
    <source>
    </source>
</evidence>
<evidence type="ECO:0000303" key="7">
    <source>
    </source>
</evidence>
<evidence type="ECO:0000303" key="8">
    <source>
    </source>
</evidence>
<evidence type="ECO:0000303" key="9">
    <source>
    </source>
</evidence>
<evidence type="ECO:0000305" key="10"/>
<evidence type="ECO:0000305" key="11">
    <source>
    </source>
</evidence>
<evidence type="ECO:0000312" key="12">
    <source>
        <dbReference type="Proteomes" id="UP000000539"/>
    </source>
</evidence>
<evidence type="ECO:0007744" key="13">
    <source>
        <dbReference type="PDB" id="3F5F"/>
    </source>
</evidence>
<evidence type="ECO:0007744" key="14">
    <source>
        <dbReference type="PDB" id="4NDZ"/>
    </source>
</evidence>
<evidence type="ECO:0007829" key="15">
    <source>
        <dbReference type="PDB" id="3F5F"/>
    </source>
</evidence>
<evidence type="ECO:0007829" key="16">
    <source>
        <dbReference type="PDB" id="4NDZ"/>
    </source>
</evidence>
<comment type="function">
    <text evidence="6">Catalyzes the transfer of a sulfo group from 3'-phospho-5'-adenylyl sulfate (PAPS) to the 2-OH position of iduronic acid (IdoA) or glucuronic acid (GlcA) within the heparan sulfate (HS) chain and participates in HS biosynthesis.</text>
</comment>
<comment type="subunit">
    <text evidence="6">Homotrimer.</text>
</comment>
<comment type="interaction">
    <interactant intactId="EBI-9026219">
        <id>Q76KB1</id>
    </interactant>
    <interactant intactId="EBI-9026219">
        <id>Q76KB1</id>
        <label>HS2ST1</label>
    </interactant>
    <organismsDiffer>false</organismsDiffer>
    <experiments>2</experiments>
</comment>
<comment type="subcellular location">
    <subcellularLocation>
        <location evidence="3">Golgi apparatus membrane</location>
        <topology evidence="3">Single-pass type II membrane protein</topology>
    </subcellularLocation>
</comment>
<comment type="tissue specificity">
    <text evidence="5">Expressed in heart, limb, head and trunk. At stages 20 and 24, it is expressed in the most regions of the first and second pharyngeal arche (PubMed:14660620). In both wing and leg buds, it is detected at the overlying ectoderm and mesenchyme throughout stages 21, 23 and 24 (PubMed:14660620).</text>
</comment>
<comment type="similarity">
    <text evidence="10">Belongs to the sulfotransferase 3 family.</text>
</comment>
<feature type="chain" id="PRO_0000207677" description="Heparan sulfate 2-O-sulfotransferase 1">
    <location>
        <begin position="1"/>
        <end position="356"/>
    </location>
</feature>
<feature type="topological domain" description="Cytoplasmic" evidence="4">
    <location>
        <begin position="1"/>
        <end position="11"/>
    </location>
</feature>
<feature type="transmembrane region" description="Helical; Signal-anchor for type II membrane protein" evidence="4">
    <location>
        <begin position="12"/>
        <end position="28"/>
    </location>
</feature>
<feature type="topological domain" description="Lumenal" evidence="4">
    <location>
        <begin position="29"/>
        <end position="356"/>
    </location>
</feature>
<feature type="coiled-coil region" evidence="4">
    <location>
        <begin position="24"/>
        <end position="51"/>
    </location>
</feature>
<feature type="active site" evidence="11">
    <location>
        <position position="140"/>
    </location>
</feature>
<feature type="active site" evidence="1">
    <location>
        <position position="142"/>
    </location>
</feature>
<feature type="binding site" evidence="6 13 14">
    <location>
        <position position="83"/>
    </location>
    <ligand>
        <name>adenosine 3',5'-bisphosphate</name>
        <dbReference type="ChEBI" id="CHEBI:58343"/>
    </ligand>
</feature>
<feature type="binding site" evidence="6 13 14">
    <location>
        <position position="84"/>
    </location>
    <ligand>
        <name>adenosine 3',5'-bisphosphate</name>
        <dbReference type="ChEBI" id="CHEBI:58343"/>
    </ligand>
</feature>
<feature type="binding site" evidence="6 13 14">
    <location>
        <position position="85"/>
    </location>
    <ligand>
        <name>adenosine 3',5'-bisphosphate</name>
        <dbReference type="ChEBI" id="CHEBI:58343"/>
    </ligand>
</feature>
<feature type="binding site" evidence="6 13 14">
    <location>
        <position position="86"/>
    </location>
    <ligand>
        <name>adenosine 3',5'-bisphosphate</name>
        <dbReference type="ChEBI" id="CHEBI:58343"/>
    </ligand>
</feature>
<feature type="binding site" evidence="6 13 14">
    <location>
        <position position="87"/>
    </location>
    <ligand>
        <name>adenosine 3',5'-bisphosphate</name>
        <dbReference type="ChEBI" id="CHEBI:58343"/>
    </ligand>
</feature>
<feature type="binding site" evidence="6 13 14">
    <location>
        <position position="88"/>
    </location>
    <ligand>
        <name>adenosine 3',5'-bisphosphate</name>
        <dbReference type="ChEBI" id="CHEBI:58343"/>
    </ligand>
</feature>
<feature type="binding site" evidence="6 13 14">
    <location>
        <position position="164"/>
    </location>
    <ligand>
        <name>adenosine 3',5'-bisphosphate</name>
        <dbReference type="ChEBI" id="CHEBI:58343"/>
    </ligand>
</feature>
<feature type="binding site" evidence="6 14">
    <location>
        <position position="172"/>
    </location>
    <ligand>
        <name>adenosine 3',5'-bisphosphate</name>
        <dbReference type="ChEBI" id="CHEBI:58343"/>
    </ligand>
</feature>
<feature type="binding site" evidence="6 13 14">
    <location>
        <position position="279"/>
    </location>
    <ligand>
        <name>adenosine 3',5'-bisphosphate</name>
        <dbReference type="ChEBI" id="CHEBI:58343"/>
    </ligand>
</feature>
<feature type="binding site" evidence="6 13 14">
    <location>
        <position position="285"/>
    </location>
    <ligand>
        <name>adenosine 3',5'-bisphosphate</name>
        <dbReference type="ChEBI" id="CHEBI:58343"/>
    </ligand>
</feature>
<feature type="binding site" evidence="6 13 14">
    <location>
        <position position="290"/>
    </location>
    <ligand>
        <name>adenosine 3',5'-bisphosphate</name>
        <dbReference type="ChEBI" id="CHEBI:58343"/>
    </ligand>
</feature>
<feature type="binding site" evidence="6 13 14">
    <location>
        <position position="293"/>
    </location>
    <ligand>
        <name>adenosine 3',5'-bisphosphate</name>
        <dbReference type="ChEBI" id="CHEBI:58343"/>
    </ligand>
</feature>
<feature type="glycosylation site" description="N-linked (GlcNAc...) asparagine" evidence="4">
    <location>
        <position position="108"/>
    </location>
</feature>
<feature type="glycosylation site" description="N-linked (GlcNAc...) asparagine" evidence="4">
    <location>
        <position position="127"/>
    </location>
</feature>
<feature type="disulfide bond" evidence="6 13 14">
    <location>
        <begin position="201"/>
        <end position="209"/>
    </location>
</feature>
<feature type="disulfide bond" evidence="6 13 14">
    <location>
        <begin position="222"/>
        <end position="228"/>
    </location>
</feature>
<feature type="mutagenesis site" description="Less than 10% activity toward polysaccharide substrates." evidence="6">
    <original>R</original>
    <variation>A</variation>
    <location>
        <position position="80"/>
    </location>
</feature>
<feature type="mutagenesis site" description="Preferentially transfers sulfates to IdoA units." evidence="6">
    <original>Y</original>
    <variation>A</variation>
    <location>
        <position position="94"/>
    </location>
</feature>
<feature type="mutagenesis site" description="Preferentially transfers sulfates to IdoA units." evidence="6">
    <original>H</original>
    <variation>A</variation>
    <location>
        <position position="106"/>
    </location>
</feature>
<feature type="mutagenesis site" description="Complete loss of activity; when associated with Ala-142." evidence="6">
    <original>H</original>
    <variation>A</variation>
    <location>
        <position position="140"/>
    </location>
</feature>
<feature type="mutagenesis site" description="Complete loss of activity; when associated with Ala-140." evidence="6">
    <original>H</original>
    <variation>A</variation>
    <location>
        <position position="142"/>
    </location>
</feature>
<feature type="mutagenesis site" description="Only transfers sulfates to GlcA moieties within the polysaccharide." evidence="6">
    <original>R</original>
    <variation>A</variation>
    <location>
        <position position="189"/>
    </location>
</feature>
<feature type="mutagenesis site" description="Less than 10% activity toward polysaccharide substrates." evidence="6">
    <original>R</original>
    <variation>A</variation>
    <location>
        <position position="288"/>
    </location>
</feature>
<feature type="strand" evidence="15">
    <location>
        <begin position="75"/>
        <end position="78"/>
    </location>
</feature>
<feature type="strand" evidence="15">
    <location>
        <begin position="82"/>
        <end position="85"/>
    </location>
</feature>
<feature type="helix" evidence="15">
    <location>
        <begin position="86"/>
        <end position="100"/>
    </location>
</feature>
<feature type="strand" evidence="15">
    <location>
        <begin position="103"/>
        <end position="107"/>
    </location>
</feature>
<feature type="helix" evidence="15">
    <location>
        <begin position="110"/>
        <end position="112"/>
    </location>
</feature>
<feature type="helix" evidence="15">
    <location>
        <begin position="118"/>
        <end position="130"/>
    </location>
</feature>
<feature type="helix" evidence="15">
    <location>
        <begin position="132"/>
        <end position="134"/>
    </location>
</feature>
<feature type="strand" evidence="15">
    <location>
        <begin position="136"/>
        <end position="142"/>
    </location>
</feature>
<feature type="helix" evidence="15">
    <location>
        <begin position="148"/>
        <end position="151"/>
    </location>
</feature>
<feature type="strand" evidence="15">
    <location>
        <begin position="158"/>
        <end position="163"/>
    </location>
</feature>
<feature type="helix" evidence="15">
    <location>
        <begin position="166"/>
        <end position="179"/>
    </location>
</feature>
<feature type="strand" evidence="15">
    <location>
        <begin position="181"/>
        <end position="184"/>
    </location>
</feature>
<feature type="helix" evidence="15">
    <location>
        <begin position="198"/>
        <end position="203"/>
    </location>
</feature>
<feature type="helix" evidence="15">
    <location>
        <begin position="211"/>
        <end position="213"/>
    </location>
</feature>
<feature type="helix" evidence="15">
    <location>
        <begin position="217"/>
        <end position="222"/>
    </location>
</feature>
<feature type="helix" evidence="15">
    <location>
        <begin position="226"/>
        <end position="229"/>
    </location>
</feature>
<feature type="helix" evidence="15">
    <location>
        <begin position="234"/>
        <end position="246"/>
    </location>
</feature>
<feature type="strand" evidence="15">
    <location>
        <begin position="248"/>
        <end position="253"/>
    </location>
</feature>
<feature type="helix" evidence="15">
    <location>
        <begin position="254"/>
        <end position="256"/>
    </location>
</feature>
<feature type="helix" evidence="15">
    <location>
        <begin position="257"/>
        <end position="267"/>
    </location>
</feature>
<feature type="helix" evidence="15">
    <location>
        <begin position="269"/>
        <end position="272"/>
    </location>
</feature>
<feature type="helix" evidence="15">
    <location>
        <begin position="275"/>
        <end position="280"/>
    </location>
</feature>
<feature type="strand" evidence="16">
    <location>
        <begin position="290"/>
        <end position="292"/>
    </location>
</feature>
<feature type="helix" evidence="15">
    <location>
        <begin position="298"/>
        <end position="304"/>
    </location>
</feature>
<feature type="helix" evidence="15">
    <location>
        <begin position="308"/>
        <end position="329"/>
    </location>
</feature>
<feature type="strand" evidence="15">
    <location>
        <begin position="332"/>
        <end position="335"/>
    </location>
</feature>
<feature type="strand" evidence="15">
    <location>
        <begin position="338"/>
        <end position="341"/>
    </location>
</feature>
<feature type="strand" evidence="15">
    <location>
        <begin position="348"/>
        <end position="352"/>
    </location>
</feature>